<name>GATC_ORITI</name>
<sequence>MISINEVQSIANYCKLRFNEQELNHMVKQLSSIVEMMNKLEKIDCTSVPPMRHFEENNRMRKDQVEQNITVDQLLSNVPQSSATIAKNTKYFVVPKIIE</sequence>
<organism>
    <name type="scientific">Orientia tsutsugamushi (strain Ikeda)</name>
    <name type="common">Rickettsia tsutsugamushi</name>
    <dbReference type="NCBI Taxonomy" id="334380"/>
    <lineage>
        <taxon>Bacteria</taxon>
        <taxon>Pseudomonadati</taxon>
        <taxon>Pseudomonadota</taxon>
        <taxon>Alphaproteobacteria</taxon>
        <taxon>Rickettsiales</taxon>
        <taxon>Rickettsiaceae</taxon>
        <taxon>Rickettsieae</taxon>
        <taxon>Orientia</taxon>
    </lineage>
</organism>
<proteinExistence type="inferred from homology"/>
<accession>B3CQR0</accession>
<keyword id="KW-0067">ATP-binding</keyword>
<keyword id="KW-0436">Ligase</keyword>
<keyword id="KW-0547">Nucleotide-binding</keyword>
<keyword id="KW-0648">Protein biosynthesis</keyword>
<reference key="1">
    <citation type="journal article" date="2008" name="DNA Res.">
        <title>The whole-genome sequencing of the obligate intracellular bacterium Orientia tsutsugamushi revealed massive gene amplification during reductive genome evolution.</title>
        <authorList>
            <person name="Nakayama K."/>
            <person name="Yamashita A."/>
            <person name="Kurokawa K."/>
            <person name="Morimoto T."/>
            <person name="Ogawa M."/>
            <person name="Fukuhara M."/>
            <person name="Urakami H."/>
            <person name="Ohnishi M."/>
            <person name="Uchiyama I."/>
            <person name="Ogura Y."/>
            <person name="Ooka T."/>
            <person name="Oshima K."/>
            <person name="Tamura A."/>
            <person name="Hattori M."/>
            <person name="Hayashi T."/>
        </authorList>
    </citation>
    <scope>NUCLEOTIDE SEQUENCE [LARGE SCALE GENOMIC DNA]</scope>
    <source>
        <strain>Ikeda</strain>
    </source>
</reference>
<protein>
    <recommendedName>
        <fullName evidence="1">Aspartyl/glutamyl-tRNA(Asn/Gln) amidotransferase subunit C</fullName>
        <shortName evidence="1">Asp/Glu-ADT subunit C</shortName>
        <ecNumber evidence="1">6.3.5.-</ecNumber>
    </recommendedName>
</protein>
<comment type="function">
    <text evidence="1">Allows the formation of correctly charged Asn-tRNA(Asn) or Gln-tRNA(Gln) through the transamidation of misacylated Asp-tRNA(Asn) or Glu-tRNA(Gln) in organisms which lack either or both of asparaginyl-tRNA or glutaminyl-tRNA synthetases. The reaction takes place in the presence of glutamine and ATP through an activated phospho-Asp-tRNA(Asn) or phospho-Glu-tRNA(Gln).</text>
</comment>
<comment type="catalytic activity">
    <reaction evidence="1">
        <text>L-glutamyl-tRNA(Gln) + L-glutamine + ATP + H2O = L-glutaminyl-tRNA(Gln) + L-glutamate + ADP + phosphate + H(+)</text>
        <dbReference type="Rhea" id="RHEA:17521"/>
        <dbReference type="Rhea" id="RHEA-COMP:9681"/>
        <dbReference type="Rhea" id="RHEA-COMP:9684"/>
        <dbReference type="ChEBI" id="CHEBI:15377"/>
        <dbReference type="ChEBI" id="CHEBI:15378"/>
        <dbReference type="ChEBI" id="CHEBI:29985"/>
        <dbReference type="ChEBI" id="CHEBI:30616"/>
        <dbReference type="ChEBI" id="CHEBI:43474"/>
        <dbReference type="ChEBI" id="CHEBI:58359"/>
        <dbReference type="ChEBI" id="CHEBI:78520"/>
        <dbReference type="ChEBI" id="CHEBI:78521"/>
        <dbReference type="ChEBI" id="CHEBI:456216"/>
    </reaction>
</comment>
<comment type="catalytic activity">
    <reaction evidence="1">
        <text>L-aspartyl-tRNA(Asn) + L-glutamine + ATP + H2O = L-asparaginyl-tRNA(Asn) + L-glutamate + ADP + phosphate + 2 H(+)</text>
        <dbReference type="Rhea" id="RHEA:14513"/>
        <dbReference type="Rhea" id="RHEA-COMP:9674"/>
        <dbReference type="Rhea" id="RHEA-COMP:9677"/>
        <dbReference type="ChEBI" id="CHEBI:15377"/>
        <dbReference type="ChEBI" id="CHEBI:15378"/>
        <dbReference type="ChEBI" id="CHEBI:29985"/>
        <dbReference type="ChEBI" id="CHEBI:30616"/>
        <dbReference type="ChEBI" id="CHEBI:43474"/>
        <dbReference type="ChEBI" id="CHEBI:58359"/>
        <dbReference type="ChEBI" id="CHEBI:78515"/>
        <dbReference type="ChEBI" id="CHEBI:78516"/>
        <dbReference type="ChEBI" id="CHEBI:456216"/>
    </reaction>
</comment>
<comment type="subunit">
    <text evidence="1">Heterotrimer of A, B and C subunits.</text>
</comment>
<comment type="similarity">
    <text evidence="1">Belongs to the GatC family.</text>
</comment>
<evidence type="ECO:0000255" key="1">
    <source>
        <dbReference type="HAMAP-Rule" id="MF_00122"/>
    </source>
</evidence>
<gene>
    <name evidence="1" type="primary">gatC</name>
    <name type="ordered locus">OTT_0368</name>
</gene>
<feature type="chain" id="PRO_1000095303" description="Aspartyl/glutamyl-tRNA(Asn/Gln) amidotransferase subunit C">
    <location>
        <begin position="1"/>
        <end position="99"/>
    </location>
</feature>
<dbReference type="EC" id="6.3.5.-" evidence="1"/>
<dbReference type="EMBL" id="AP008981">
    <property type="protein sequence ID" value="BAG39826.1"/>
    <property type="molecule type" value="Genomic_DNA"/>
</dbReference>
<dbReference type="RefSeq" id="WP_012461053.1">
    <property type="nucleotide sequence ID" value="NC_010793.1"/>
</dbReference>
<dbReference type="SMR" id="B3CQR0"/>
<dbReference type="KEGG" id="ott:OTT_0368"/>
<dbReference type="HOGENOM" id="CLU_105899_2_0_5"/>
<dbReference type="OrthoDB" id="7161724at2"/>
<dbReference type="Proteomes" id="UP000001033">
    <property type="component" value="Chromosome"/>
</dbReference>
<dbReference type="GO" id="GO:0050566">
    <property type="term" value="F:asparaginyl-tRNA synthase (glutamine-hydrolyzing) activity"/>
    <property type="evidence" value="ECO:0007669"/>
    <property type="project" value="RHEA"/>
</dbReference>
<dbReference type="GO" id="GO:0005524">
    <property type="term" value="F:ATP binding"/>
    <property type="evidence" value="ECO:0007669"/>
    <property type="project" value="UniProtKB-KW"/>
</dbReference>
<dbReference type="GO" id="GO:0050567">
    <property type="term" value="F:glutaminyl-tRNA synthase (glutamine-hydrolyzing) activity"/>
    <property type="evidence" value="ECO:0007669"/>
    <property type="project" value="UniProtKB-UniRule"/>
</dbReference>
<dbReference type="GO" id="GO:0070681">
    <property type="term" value="P:glutaminyl-tRNAGln biosynthesis via transamidation"/>
    <property type="evidence" value="ECO:0007669"/>
    <property type="project" value="TreeGrafter"/>
</dbReference>
<dbReference type="GO" id="GO:0006450">
    <property type="term" value="P:regulation of translational fidelity"/>
    <property type="evidence" value="ECO:0007669"/>
    <property type="project" value="InterPro"/>
</dbReference>
<dbReference type="GO" id="GO:0006412">
    <property type="term" value="P:translation"/>
    <property type="evidence" value="ECO:0007669"/>
    <property type="project" value="UniProtKB-UniRule"/>
</dbReference>
<dbReference type="Gene3D" id="1.10.20.60">
    <property type="entry name" value="Glu-tRNAGln amidotransferase C subunit, N-terminal domain"/>
    <property type="match status" value="1"/>
</dbReference>
<dbReference type="HAMAP" id="MF_00122">
    <property type="entry name" value="GatC"/>
    <property type="match status" value="1"/>
</dbReference>
<dbReference type="InterPro" id="IPR036113">
    <property type="entry name" value="Asp/Glu-ADT_sf_sub_c"/>
</dbReference>
<dbReference type="InterPro" id="IPR003837">
    <property type="entry name" value="GatC"/>
</dbReference>
<dbReference type="NCBIfam" id="TIGR00135">
    <property type="entry name" value="gatC"/>
    <property type="match status" value="1"/>
</dbReference>
<dbReference type="PANTHER" id="PTHR15004">
    <property type="entry name" value="GLUTAMYL-TRNA(GLN) AMIDOTRANSFERASE SUBUNIT C, MITOCHONDRIAL"/>
    <property type="match status" value="1"/>
</dbReference>
<dbReference type="PANTHER" id="PTHR15004:SF0">
    <property type="entry name" value="GLUTAMYL-TRNA(GLN) AMIDOTRANSFERASE SUBUNIT C, MITOCHONDRIAL"/>
    <property type="match status" value="1"/>
</dbReference>
<dbReference type="Pfam" id="PF02686">
    <property type="entry name" value="GatC"/>
    <property type="match status" value="1"/>
</dbReference>
<dbReference type="SUPFAM" id="SSF141000">
    <property type="entry name" value="Glu-tRNAGln amidotransferase C subunit"/>
    <property type="match status" value="1"/>
</dbReference>